<organism>
    <name type="scientific">Leuconostoc citreum (strain KM20)</name>
    <dbReference type="NCBI Taxonomy" id="349519"/>
    <lineage>
        <taxon>Bacteria</taxon>
        <taxon>Bacillati</taxon>
        <taxon>Bacillota</taxon>
        <taxon>Bacilli</taxon>
        <taxon>Lactobacillales</taxon>
        <taxon>Lactobacillaceae</taxon>
        <taxon>Leuconostoc</taxon>
    </lineage>
</organism>
<sequence length="1059" mass="115507">MPKRKDIQKVLVIGSGPIVIGQAAEFDYSGTQAALSLKEEGYYVILVNSNPATIMTDAEIADKVYIEPLSIDFIERILRKERPDAILPTLGGQTGLNMAKNLSEAGILDELRIELLGTKLSAIEEAEDREEFKALMERLNEPIPESVIATTVEEAVDFADTHGYPVIVRPAYTLGGTGGGIAATHQELVDISANGLELSPVTQVLIERSIAGYKEIEFEVMRDAHDNALVVASMENFDPVGVHTGDSIVTAPVQTLSDREVQMMRDAALKIIRALKIEGGVNIQMALDPQSYKYYIIEVNPRVSRSSALASKATGYPIAKMAAKIAVGLTLDEIINPVTGTTKAEFEPALDYVVFKIPRWPFDKFATADRRLGTQMKATGEVMAIGRNMEEAMLKAVRSLEIGVTGLNDLTFDELSDEALLSALMPARDDRLFMIADLLRRGVSIETIHAKTQIDEFFLDKVSHVVEIERDLSTHVGDIEYLLYAKKNGFADATIAGLWGQTAAEVRKQRHDANVLPVYKMVDTVAAEFESQTPYFYATYERENESVRSKKPSVIVLGSGPIRIGQGVEFDYATVHAVKAIQRAGYEAIIMNSNPETVSTDFSISDKLYFEPLTLEDVLNVIDLEQPLGVVVQFGGQTAINLAQPLEENGVNILGTTVDDLNRAEDREAFDQVIKTLALPQPVGKTATTVDGALNAAQAIGYPVLIRPSYVLGGRAMEIVSSDDELQDYMQRAVKVSNDHPVLIDSYLVGQEAEVDVLSDGETAVIPGIMEHIERAGVHSGDSMSVYPPQYLSQKVQDEMTAAAINLAKAMNTIGLMNVQFVIHDNTAYVIEVNPRASRTVPFISKVTHLPLAQLATRVMLGEKLVDMGFETGLIPADDMVHVKAPIFSFTKLPDVDSLLGPEMKSTGEVMGSDTTLPKALYKAFVASNIKVPQYGNVLFTVADADKAEAINLAKRFNNLGFALFATSGTGAHFAEQNLPVDILDKIAESDNNSVAALRSQRLQVVINTTQADDRAESDGRLIRNAAIENAVPLFTALDTVSAFLDVLESRSFTVNEMK</sequence>
<proteinExistence type="inferred from homology"/>
<comment type="function">
    <text evidence="1">Large subunit of the glutamine-dependent carbamoyl phosphate synthetase (CPSase). CPSase catalyzes the formation of carbamoyl phosphate from the ammonia moiety of glutamine, carbonate, and phosphate donated by ATP, constituting the first step of 2 biosynthetic pathways, one leading to arginine and/or urea and the other to pyrimidine nucleotides. The large subunit (synthetase) binds the substrates ammonia (free or transferred from glutamine from the small subunit), hydrogencarbonate and ATP and carries out an ATP-coupled ligase reaction, activating hydrogencarbonate by forming carboxy phosphate which reacts with ammonia to form carbamoyl phosphate.</text>
</comment>
<comment type="catalytic activity">
    <reaction evidence="1">
        <text>hydrogencarbonate + L-glutamine + 2 ATP + H2O = carbamoyl phosphate + L-glutamate + 2 ADP + phosphate + 2 H(+)</text>
        <dbReference type="Rhea" id="RHEA:18633"/>
        <dbReference type="ChEBI" id="CHEBI:15377"/>
        <dbReference type="ChEBI" id="CHEBI:15378"/>
        <dbReference type="ChEBI" id="CHEBI:17544"/>
        <dbReference type="ChEBI" id="CHEBI:29985"/>
        <dbReference type="ChEBI" id="CHEBI:30616"/>
        <dbReference type="ChEBI" id="CHEBI:43474"/>
        <dbReference type="ChEBI" id="CHEBI:58228"/>
        <dbReference type="ChEBI" id="CHEBI:58359"/>
        <dbReference type="ChEBI" id="CHEBI:456216"/>
        <dbReference type="EC" id="6.3.5.5"/>
    </reaction>
</comment>
<comment type="catalytic activity">
    <molecule>Carbamoyl phosphate synthase large chain</molecule>
    <reaction evidence="1">
        <text>hydrogencarbonate + NH4(+) + 2 ATP = carbamoyl phosphate + 2 ADP + phosphate + 2 H(+)</text>
        <dbReference type="Rhea" id="RHEA:18029"/>
        <dbReference type="ChEBI" id="CHEBI:15378"/>
        <dbReference type="ChEBI" id="CHEBI:17544"/>
        <dbReference type="ChEBI" id="CHEBI:28938"/>
        <dbReference type="ChEBI" id="CHEBI:30616"/>
        <dbReference type="ChEBI" id="CHEBI:43474"/>
        <dbReference type="ChEBI" id="CHEBI:58228"/>
        <dbReference type="ChEBI" id="CHEBI:456216"/>
        <dbReference type="EC" id="6.3.4.16"/>
    </reaction>
</comment>
<comment type="cofactor">
    <cofactor evidence="1">
        <name>Mg(2+)</name>
        <dbReference type="ChEBI" id="CHEBI:18420"/>
    </cofactor>
    <cofactor evidence="1">
        <name>Mn(2+)</name>
        <dbReference type="ChEBI" id="CHEBI:29035"/>
    </cofactor>
    <text evidence="1">Binds 4 Mg(2+) or Mn(2+) ions per subunit.</text>
</comment>
<comment type="pathway">
    <text evidence="1">Amino-acid biosynthesis; L-arginine biosynthesis; carbamoyl phosphate from bicarbonate: step 1/1.</text>
</comment>
<comment type="pathway">
    <text evidence="1">Pyrimidine metabolism; UMP biosynthesis via de novo pathway; (S)-dihydroorotate from bicarbonate: step 1/3.</text>
</comment>
<comment type="subunit">
    <text evidence="1">Composed of two chains; the small (or glutamine) chain promotes the hydrolysis of glutamine to ammonia, which is used by the large (or ammonia) chain to synthesize carbamoyl phosphate. Tetramer of heterodimers (alpha,beta)4.</text>
</comment>
<comment type="domain">
    <text evidence="1">The large subunit is composed of 2 ATP-grasp domains that are involved in binding the 2 ATP molecules needed for carbamoyl phosphate synthesis. The N-terminal ATP-grasp domain (referred to as the carboxyphosphate synthetic component) catalyzes the ATP-dependent phosphorylation of hydrogencarbonate to carboxyphosphate and the subsequent nucleophilic attack by ammonia to form a carbamate intermediate. The C-terminal ATP-grasp domain (referred to as the carbamoyl phosphate synthetic component) then catalyzes the phosphorylation of carbamate with the second ATP to form the end product carbamoyl phosphate. The reactive and unstable enzyme intermediates are sequentially channeled from one active site to the next through the interior of the protein over a distance of at least 96 A.</text>
</comment>
<comment type="similarity">
    <text evidence="1">Belongs to the CarB family.</text>
</comment>
<dbReference type="EC" id="6.3.4.16" evidence="1"/>
<dbReference type="EC" id="6.3.5.5" evidence="1"/>
<dbReference type="EMBL" id="DQ489736">
    <property type="protein sequence ID" value="ACA82826.1"/>
    <property type="molecule type" value="Genomic_DNA"/>
</dbReference>
<dbReference type="RefSeq" id="WP_012305266.1">
    <property type="nucleotide sequence ID" value="NC_010471.1"/>
</dbReference>
<dbReference type="SMR" id="B1MZ74"/>
<dbReference type="STRING" id="349519.LCK_00999"/>
<dbReference type="KEGG" id="lci:LCK_00999"/>
<dbReference type="eggNOG" id="COG0458">
    <property type="taxonomic scope" value="Bacteria"/>
</dbReference>
<dbReference type="HOGENOM" id="CLU_000513_1_2_9"/>
<dbReference type="OrthoDB" id="9804197at2"/>
<dbReference type="UniPathway" id="UPA00068">
    <property type="reaction ID" value="UER00171"/>
</dbReference>
<dbReference type="UniPathway" id="UPA00070">
    <property type="reaction ID" value="UER00115"/>
</dbReference>
<dbReference type="Proteomes" id="UP000002166">
    <property type="component" value="Chromosome"/>
</dbReference>
<dbReference type="GO" id="GO:0005737">
    <property type="term" value="C:cytoplasm"/>
    <property type="evidence" value="ECO:0007669"/>
    <property type="project" value="TreeGrafter"/>
</dbReference>
<dbReference type="GO" id="GO:0005524">
    <property type="term" value="F:ATP binding"/>
    <property type="evidence" value="ECO:0007669"/>
    <property type="project" value="UniProtKB-UniRule"/>
</dbReference>
<dbReference type="GO" id="GO:0004087">
    <property type="term" value="F:carbamoyl-phosphate synthase (ammonia) activity"/>
    <property type="evidence" value="ECO:0007669"/>
    <property type="project" value="RHEA"/>
</dbReference>
<dbReference type="GO" id="GO:0004088">
    <property type="term" value="F:carbamoyl-phosphate synthase (glutamine-hydrolyzing) activity"/>
    <property type="evidence" value="ECO:0007669"/>
    <property type="project" value="UniProtKB-UniRule"/>
</dbReference>
<dbReference type="GO" id="GO:0046872">
    <property type="term" value="F:metal ion binding"/>
    <property type="evidence" value="ECO:0007669"/>
    <property type="project" value="UniProtKB-KW"/>
</dbReference>
<dbReference type="GO" id="GO:0044205">
    <property type="term" value="P:'de novo' UMP biosynthetic process"/>
    <property type="evidence" value="ECO:0007669"/>
    <property type="project" value="UniProtKB-UniRule"/>
</dbReference>
<dbReference type="GO" id="GO:0006541">
    <property type="term" value="P:glutamine metabolic process"/>
    <property type="evidence" value="ECO:0007669"/>
    <property type="project" value="TreeGrafter"/>
</dbReference>
<dbReference type="GO" id="GO:0006526">
    <property type="term" value="P:L-arginine biosynthetic process"/>
    <property type="evidence" value="ECO:0007669"/>
    <property type="project" value="UniProtKB-UniRule"/>
</dbReference>
<dbReference type="CDD" id="cd01424">
    <property type="entry name" value="MGS_CPS_II"/>
    <property type="match status" value="1"/>
</dbReference>
<dbReference type="FunFam" id="1.10.1030.10:FF:000002">
    <property type="entry name" value="Carbamoyl-phosphate synthase large chain"/>
    <property type="match status" value="1"/>
</dbReference>
<dbReference type="FunFam" id="3.30.1490.20:FF:000001">
    <property type="entry name" value="Carbamoyl-phosphate synthase large chain"/>
    <property type="match status" value="1"/>
</dbReference>
<dbReference type="FunFam" id="3.30.470.20:FF:000001">
    <property type="entry name" value="Carbamoyl-phosphate synthase large chain"/>
    <property type="match status" value="1"/>
</dbReference>
<dbReference type="FunFam" id="3.30.470.20:FF:000026">
    <property type="entry name" value="Carbamoyl-phosphate synthase large chain"/>
    <property type="match status" value="1"/>
</dbReference>
<dbReference type="FunFam" id="3.40.50.20:FF:000001">
    <property type="entry name" value="Carbamoyl-phosphate synthase large chain"/>
    <property type="match status" value="2"/>
</dbReference>
<dbReference type="Gene3D" id="3.40.50.20">
    <property type="match status" value="2"/>
</dbReference>
<dbReference type="Gene3D" id="3.30.470.20">
    <property type="entry name" value="ATP-grasp fold, B domain"/>
    <property type="match status" value="2"/>
</dbReference>
<dbReference type="Gene3D" id="1.10.1030.10">
    <property type="entry name" value="Carbamoyl-phosphate synthetase, large subunit oligomerisation domain"/>
    <property type="match status" value="1"/>
</dbReference>
<dbReference type="Gene3D" id="3.40.50.1380">
    <property type="entry name" value="Methylglyoxal synthase-like domain"/>
    <property type="match status" value="1"/>
</dbReference>
<dbReference type="HAMAP" id="MF_01210_B">
    <property type="entry name" value="CPSase_L_chain_B"/>
    <property type="match status" value="1"/>
</dbReference>
<dbReference type="InterPro" id="IPR011761">
    <property type="entry name" value="ATP-grasp"/>
</dbReference>
<dbReference type="InterPro" id="IPR006275">
    <property type="entry name" value="CarbamoylP_synth_lsu"/>
</dbReference>
<dbReference type="InterPro" id="IPR005480">
    <property type="entry name" value="CarbamoylP_synth_lsu_oligo"/>
</dbReference>
<dbReference type="InterPro" id="IPR036897">
    <property type="entry name" value="CarbamoylP_synth_lsu_oligo_sf"/>
</dbReference>
<dbReference type="InterPro" id="IPR005479">
    <property type="entry name" value="CbamoylP_synth_lsu-like_ATP-bd"/>
</dbReference>
<dbReference type="InterPro" id="IPR005483">
    <property type="entry name" value="CbamoylP_synth_lsu_CPSase_dom"/>
</dbReference>
<dbReference type="InterPro" id="IPR011607">
    <property type="entry name" value="MGS-like_dom"/>
</dbReference>
<dbReference type="InterPro" id="IPR036914">
    <property type="entry name" value="MGS-like_dom_sf"/>
</dbReference>
<dbReference type="InterPro" id="IPR033937">
    <property type="entry name" value="MGS_CPS_CarB"/>
</dbReference>
<dbReference type="InterPro" id="IPR016185">
    <property type="entry name" value="PreATP-grasp_dom_sf"/>
</dbReference>
<dbReference type="NCBIfam" id="TIGR01369">
    <property type="entry name" value="CPSaseII_lrg"/>
    <property type="match status" value="1"/>
</dbReference>
<dbReference type="NCBIfam" id="NF003671">
    <property type="entry name" value="PRK05294.1"/>
    <property type="match status" value="1"/>
</dbReference>
<dbReference type="NCBIfam" id="NF009455">
    <property type="entry name" value="PRK12815.1"/>
    <property type="match status" value="1"/>
</dbReference>
<dbReference type="PANTHER" id="PTHR11405:SF53">
    <property type="entry name" value="CARBAMOYL-PHOSPHATE SYNTHASE [AMMONIA], MITOCHONDRIAL"/>
    <property type="match status" value="1"/>
</dbReference>
<dbReference type="PANTHER" id="PTHR11405">
    <property type="entry name" value="CARBAMOYLTRANSFERASE FAMILY MEMBER"/>
    <property type="match status" value="1"/>
</dbReference>
<dbReference type="Pfam" id="PF02786">
    <property type="entry name" value="CPSase_L_D2"/>
    <property type="match status" value="2"/>
</dbReference>
<dbReference type="Pfam" id="PF02787">
    <property type="entry name" value="CPSase_L_D3"/>
    <property type="match status" value="1"/>
</dbReference>
<dbReference type="Pfam" id="PF02142">
    <property type="entry name" value="MGS"/>
    <property type="match status" value="1"/>
</dbReference>
<dbReference type="PRINTS" id="PR00098">
    <property type="entry name" value="CPSASE"/>
</dbReference>
<dbReference type="SMART" id="SM01096">
    <property type="entry name" value="CPSase_L_D3"/>
    <property type="match status" value="1"/>
</dbReference>
<dbReference type="SMART" id="SM00851">
    <property type="entry name" value="MGS"/>
    <property type="match status" value="1"/>
</dbReference>
<dbReference type="SUPFAM" id="SSF48108">
    <property type="entry name" value="Carbamoyl phosphate synthetase, large subunit connection domain"/>
    <property type="match status" value="1"/>
</dbReference>
<dbReference type="SUPFAM" id="SSF56059">
    <property type="entry name" value="Glutathione synthetase ATP-binding domain-like"/>
    <property type="match status" value="2"/>
</dbReference>
<dbReference type="SUPFAM" id="SSF52335">
    <property type="entry name" value="Methylglyoxal synthase-like"/>
    <property type="match status" value="1"/>
</dbReference>
<dbReference type="SUPFAM" id="SSF52440">
    <property type="entry name" value="PreATP-grasp domain"/>
    <property type="match status" value="2"/>
</dbReference>
<dbReference type="PROSITE" id="PS50975">
    <property type="entry name" value="ATP_GRASP"/>
    <property type="match status" value="2"/>
</dbReference>
<dbReference type="PROSITE" id="PS00866">
    <property type="entry name" value="CPSASE_1"/>
    <property type="match status" value="2"/>
</dbReference>
<dbReference type="PROSITE" id="PS00867">
    <property type="entry name" value="CPSASE_2"/>
    <property type="match status" value="2"/>
</dbReference>
<dbReference type="PROSITE" id="PS51855">
    <property type="entry name" value="MGS"/>
    <property type="match status" value="1"/>
</dbReference>
<accession>B1MZ74</accession>
<name>CARB_LEUCK</name>
<keyword id="KW-0028">Amino-acid biosynthesis</keyword>
<keyword id="KW-0055">Arginine biosynthesis</keyword>
<keyword id="KW-0067">ATP-binding</keyword>
<keyword id="KW-0436">Ligase</keyword>
<keyword id="KW-0460">Magnesium</keyword>
<keyword id="KW-0464">Manganese</keyword>
<keyword id="KW-0479">Metal-binding</keyword>
<keyword id="KW-0547">Nucleotide-binding</keyword>
<keyword id="KW-0665">Pyrimidine biosynthesis</keyword>
<keyword id="KW-1185">Reference proteome</keyword>
<keyword id="KW-0677">Repeat</keyword>
<reference key="1">
    <citation type="journal article" date="2008" name="J. Bacteriol.">
        <title>Complete genome sequence of Leuconostoc citreum KM20.</title>
        <authorList>
            <person name="Kim J.F."/>
            <person name="Jeong H."/>
            <person name="Lee J.-S."/>
            <person name="Choi S.-H."/>
            <person name="Ha M."/>
            <person name="Hur C.-G."/>
            <person name="Kim J.-S."/>
            <person name="Lee S."/>
            <person name="Park H.-S."/>
            <person name="Park Y.-H."/>
            <person name="Oh T.K."/>
        </authorList>
    </citation>
    <scope>NUCLEOTIDE SEQUENCE [LARGE SCALE GENOMIC DNA]</scope>
    <source>
        <strain>KM20</strain>
    </source>
</reference>
<feature type="chain" id="PRO_1000138895" description="Carbamoyl phosphate synthase large chain">
    <location>
        <begin position="1"/>
        <end position="1059"/>
    </location>
</feature>
<feature type="domain" description="ATP-grasp 1" evidence="1">
    <location>
        <begin position="133"/>
        <end position="327"/>
    </location>
</feature>
<feature type="domain" description="ATP-grasp 2" evidence="1">
    <location>
        <begin position="671"/>
        <end position="861"/>
    </location>
</feature>
<feature type="domain" description="MGS-like" evidence="1">
    <location>
        <begin position="930"/>
        <end position="1059"/>
    </location>
</feature>
<feature type="region of interest" description="Carboxyphosphate synthetic domain" evidence="1">
    <location>
        <begin position="1"/>
        <end position="401"/>
    </location>
</feature>
<feature type="region of interest" description="Oligomerization domain" evidence="1">
    <location>
        <begin position="402"/>
        <end position="546"/>
    </location>
</feature>
<feature type="region of interest" description="Carbamoyl phosphate synthetic domain" evidence="1">
    <location>
        <begin position="547"/>
        <end position="929"/>
    </location>
</feature>
<feature type="region of interest" description="Allosteric domain" evidence="1">
    <location>
        <begin position="930"/>
        <end position="1059"/>
    </location>
</feature>
<feature type="binding site" evidence="1">
    <location>
        <position position="129"/>
    </location>
    <ligand>
        <name>ATP</name>
        <dbReference type="ChEBI" id="CHEBI:30616"/>
        <label>1</label>
    </ligand>
</feature>
<feature type="binding site" evidence="1">
    <location>
        <position position="169"/>
    </location>
    <ligand>
        <name>ATP</name>
        <dbReference type="ChEBI" id="CHEBI:30616"/>
        <label>1</label>
    </ligand>
</feature>
<feature type="binding site" evidence="1">
    <location>
        <position position="175"/>
    </location>
    <ligand>
        <name>ATP</name>
        <dbReference type="ChEBI" id="CHEBI:30616"/>
        <label>1</label>
    </ligand>
</feature>
<feature type="binding site" evidence="1">
    <location>
        <position position="176"/>
    </location>
    <ligand>
        <name>ATP</name>
        <dbReference type="ChEBI" id="CHEBI:30616"/>
        <label>1</label>
    </ligand>
</feature>
<feature type="binding site" evidence="1">
    <location>
        <position position="208"/>
    </location>
    <ligand>
        <name>ATP</name>
        <dbReference type="ChEBI" id="CHEBI:30616"/>
        <label>1</label>
    </ligand>
</feature>
<feature type="binding site" evidence="1">
    <location>
        <position position="210"/>
    </location>
    <ligand>
        <name>ATP</name>
        <dbReference type="ChEBI" id="CHEBI:30616"/>
        <label>1</label>
    </ligand>
</feature>
<feature type="binding site" evidence="1">
    <location>
        <position position="215"/>
    </location>
    <ligand>
        <name>ATP</name>
        <dbReference type="ChEBI" id="CHEBI:30616"/>
        <label>1</label>
    </ligand>
</feature>
<feature type="binding site" evidence="1">
    <location>
        <position position="241"/>
    </location>
    <ligand>
        <name>ATP</name>
        <dbReference type="ChEBI" id="CHEBI:30616"/>
        <label>1</label>
    </ligand>
</feature>
<feature type="binding site" evidence="1">
    <location>
        <position position="242"/>
    </location>
    <ligand>
        <name>ATP</name>
        <dbReference type="ChEBI" id="CHEBI:30616"/>
        <label>1</label>
    </ligand>
</feature>
<feature type="binding site" evidence="1">
    <location>
        <position position="243"/>
    </location>
    <ligand>
        <name>ATP</name>
        <dbReference type="ChEBI" id="CHEBI:30616"/>
        <label>1</label>
    </ligand>
</feature>
<feature type="binding site" evidence="1">
    <location>
        <position position="284"/>
    </location>
    <ligand>
        <name>ATP</name>
        <dbReference type="ChEBI" id="CHEBI:30616"/>
        <label>1</label>
    </ligand>
</feature>
<feature type="binding site" evidence="1">
    <location>
        <position position="284"/>
    </location>
    <ligand>
        <name>Mg(2+)</name>
        <dbReference type="ChEBI" id="CHEBI:18420"/>
        <label>1</label>
    </ligand>
</feature>
<feature type="binding site" evidence="1">
    <location>
        <position position="284"/>
    </location>
    <ligand>
        <name>Mn(2+)</name>
        <dbReference type="ChEBI" id="CHEBI:29035"/>
        <label>1</label>
    </ligand>
</feature>
<feature type="binding site" evidence="1">
    <location>
        <position position="298"/>
    </location>
    <ligand>
        <name>ATP</name>
        <dbReference type="ChEBI" id="CHEBI:30616"/>
        <label>1</label>
    </ligand>
</feature>
<feature type="binding site" evidence="1">
    <location>
        <position position="298"/>
    </location>
    <ligand>
        <name>Mg(2+)</name>
        <dbReference type="ChEBI" id="CHEBI:18420"/>
        <label>1</label>
    </ligand>
</feature>
<feature type="binding site" evidence="1">
    <location>
        <position position="298"/>
    </location>
    <ligand>
        <name>Mg(2+)</name>
        <dbReference type="ChEBI" id="CHEBI:18420"/>
        <label>2</label>
    </ligand>
</feature>
<feature type="binding site" evidence="1">
    <location>
        <position position="298"/>
    </location>
    <ligand>
        <name>Mn(2+)</name>
        <dbReference type="ChEBI" id="CHEBI:29035"/>
        <label>1</label>
    </ligand>
</feature>
<feature type="binding site" evidence="1">
    <location>
        <position position="298"/>
    </location>
    <ligand>
        <name>Mn(2+)</name>
        <dbReference type="ChEBI" id="CHEBI:29035"/>
        <label>2</label>
    </ligand>
</feature>
<feature type="binding site" evidence="1">
    <location>
        <position position="300"/>
    </location>
    <ligand>
        <name>Mg(2+)</name>
        <dbReference type="ChEBI" id="CHEBI:18420"/>
        <label>2</label>
    </ligand>
</feature>
<feature type="binding site" evidence="1">
    <location>
        <position position="300"/>
    </location>
    <ligand>
        <name>Mn(2+)</name>
        <dbReference type="ChEBI" id="CHEBI:29035"/>
        <label>2</label>
    </ligand>
</feature>
<feature type="binding site" evidence="1">
    <location>
        <position position="707"/>
    </location>
    <ligand>
        <name>ATP</name>
        <dbReference type="ChEBI" id="CHEBI:30616"/>
        <label>2</label>
    </ligand>
</feature>
<feature type="binding site" evidence="1">
    <location>
        <position position="746"/>
    </location>
    <ligand>
        <name>ATP</name>
        <dbReference type="ChEBI" id="CHEBI:30616"/>
        <label>2</label>
    </ligand>
</feature>
<feature type="binding site" evidence="1">
    <location>
        <position position="748"/>
    </location>
    <ligand>
        <name>ATP</name>
        <dbReference type="ChEBI" id="CHEBI:30616"/>
        <label>2</label>
    </ligand>
</feature>
<feature type="binding site" evidence="1">
    <location>
        <position position="752"/>
    </location>
    <ligand>
        <name>ATP</name>
        <dbReference type="ChEBI" id="CHEBI:30616"/>
        <label>2</label>
    </ligand>
</feature>
<feature type="binding site" evidence="1">
    <location>
        <position position="777"/>
    </location>
    <ligand>
        <name>ATP</name>
        <dbReference type="ChEBI" id="CHEBI:30616"/>
        <label>2</label>
    </ligand>
</feature>
<feature type="binding site" evidence="1">
    <location>
        <position position="778"/>
    </location>
    <ligand>
        <name>ATP</name>
        <dbReference type="ChEBI" id="CHEBI:30616"/>
        <label>2</label>
    </ligand>
</feature>
<feature type="binding site" evidence="1">
    <location>
        <position position="779"/>
    </location>
    <ligand>
        <name>ATP</name>
        <dbReference type="ChEBI" id="CHEBI:30616"/>
        <label>2</label>
    </ligand>
</feature>
<feature type="binding site" evidence="1">
    <location>
        <position position="780"/>
    </location>
    <ligand>
        <name>ATP</name>
        <dbReference type="ChEBI" id="CHEBI:30616"/>
        <label>2</label>
    </ligand>
</feature>
<feature type="binding site" evidence="1">
    <location>
        <position position="820"/>
    </location>
    <ligand>
        <name>ATP</name>
        <dbReference type="ChEBI" id="CHEBI:30616"/>
        <label>2</label>
    </ligand>
</feature>
<feature type="binding site" evidence="1">
    <location>
        <position position="820"/>
    </location>
    <ligand>
        <name>Mg(2+)</name>
        <dbReference type="ChEBI" id="CHEBI:18420"/>
        <label>3</label>
    </ligand>
</feature>
<feature type="binding site" evidence="1">
    <location>
        <position position="820"/>
    </location>
    <ligand>
        <name>Mn(2+)</name>
        <dbReference type="ChEBI" id="CHEBI:29035"/>
        <label>3</label>
    </ligand>
</feature>
<feature type="binding site" evidence="1">
    <location>
        <position position="832"/>
    </location>
    <ligand>
        <name>ATP</name>
        <dbReference type="ChEBI" id="CHEBI:30616"/>
        <label>2</label>
    </ligand>
</feature>
<feature type="binding site" evidence="1">
    <location>
        <position position="832"/>
    </location>
    <ligand>
        <name>Mg(2+)</name>
        <dbReference type="ChEBI" id="CHEBI:18420"/>
        <label>3</label>
    </ligand>
</feature>
<feature type="binding site" evidence="1">
    <location>
        <position position="832"/>
    </location>
    <ligand>
        <name>Mg(2+)</name>
        <dbReference type="ChEBI" id="CHEBI:18420"/>
        <label>4</label>
    </ligand>
</feature>
<feature type="binding site" evidence="1">
    <location>
        <position position="832"/>
    </location>
    <ligand>
        <name>Mn(2+)</name>
        <dbReference type="ChEBI" id="CHEBI:29035"/>
        <label>3</label>
    </ligand>
</feature>
<feature type="binding site" evidence="1">
    <location>
        <position position="832"/>
    </location>
    <ligand>
        <name>Mn(2+)</name>
        <dbReference type="ChEBI" id="CHEBI:29035"/>
        <label>4</label>
    </ligand>
</feature>
<feature type="binding site" evidence="1">
    <location>
        <position position="834"/>
    </location>
    <ligand>
        <name>Mg(2+)</name>
        <dbReference type="ChEBI" id="CHEBI:18420"/>
        <label>4</label>
    </ligand>
</feature>
<feature type="binding site" evidence="1">
    <location>
        <position position="834"/>
    </location>
    <ligand>
        <name>Mn(2+)</name>
        <dbReference type="ChEBI" id="CHEBI:29035"/>
        <label>4</label>
    </ligand>
</feature>
<evidence type="ECO:0000255" key="1">
    <source>
        <dbReference type="HAMAP-Rule" id="MF_01210"/>
    </source>
</evidence>
<gene>
    <name evidence="1" type="primary">carB</name>
    <name type="ordered locus">LCK_00999</name>
</gene>
<protein>
    <recommendedName>
        <fullName evidence="1">Carbamoyl phosphate synthase large chain</fullName>
        <ecNumber evidence="1">6.3.4.16</ecNumber>
        <ecNumber evidence="1">6.3.5.5</ecNumber>
    </recommendedName>
    <alternativeName>
        <fullName evidence="1">Carbamoyl phosphate synthetase ammonia chain</fullName>
    </alternativeName>
</protein>